<comment type="function">
    <text evidence="1">Catalyzes the ATP-dependent phosphorylation of L-homoserine to L-homoserine phosphate.</text>
</comment>
<comment type="catalytic activity">
    <reaction evidence="1">
        <text>L-homoserine + ATP = O-phospho-L-homoserine + ADP + H(+)</text>
        <dbReference type="Rhea" id="RHEA:13985"/>
        <dbReference type="ChEBI" id="CHEBI:15378"/>
        <dbReference type="ChEBI" id="CHEBI:30616"/>
        <dbReference type="ChEBI" id="CHEBI:57476"/>
        <dbReference type="ChEBI" id="CHEBI:57590"/>
        <dbReference type="ChEBI" id="CHEBI:456216"/>
        <dbReference type="EC" id="2.7.1.39"/>
    </reaction>
</comment>
<comment type="pathway">
    <text evidence="1">Amino-acid biosynthesis; L-threonine biosynthesis; L-threonine from L-aspartate: step 4/5.</text>
</comment>
<comment type="subcellular location">
    <subcellularLocation>
        <location evidence="1">Cytoplasm</location>
    </subcellularLocation>
</comment>
<comment type="similarity">
    <text evidence="1">Belongs to the GHMP kinase family. Homoserine kinase subfamily.</text>
</comment>
<keyword id="KW-0028">Amino-acid biosynthesis</keyword>
<keyword id="KW-0067">ATP-binding</keyword>
<keyword id="KW-0963">Cytoplasm</keyword>
<keyword id="KW-0418">Kinase</keyword>
<keyword id="KW-0547">Nucleotide-binding</keyword>
<keyword id="KW-0791">Threonine biosynthesis</keyword>
<keyword id="KW-0808">Transferase</keyword>
<sequence>MVKIYAPASIGNVSVGFDVLGAAVSPIDGTLLGDCVSVTAAERFSLHNEGRFVSKLPDDPKQNIVYQCWERFCQEMGKEIPVAMVLEKNMPIGSGLGSSACSVVAGLMAMNEFCGQPLDKVTLLGMMGELEGRVSGSIHFDNVAPCYLGGMQLILEQEGYISQDVPGFSDWLWVMAYPGIKVSTAEARAILPAQYRRQDCITHGRNLAGFIHACHTQQPDLAAKMMKDVIAEPYRTQLLPGFAAARQAAQDIGALACGISGSGPTLFAVCNDQATAQRMAGWLQNHYLQNDEGFVHICRLDTAGARLLG</sequence>
<evidence type="ECO:0000255" key="1">
    <source>
        <dbReference type="HAMAP-Rule" id="MF_00384"/>
    </source>
</evidence>
<organism>
    <name type="scientific">Yersinia pseudotuberculosis serotype O:1b (strain IP 31758)</name>
    <dbReference type="NCBI Taxonomy" id="349747"/>
    <lineage>
        <taxon>Bacteria</taxon>
        <taxon>Pseudomonadati</taxon>
        <taxon>Pseudomonadota</taxon>
        <taxon>Gammaproteobacteria</taxon>
        <taxon>Enterobacterales</taxon>
        <taxon>Yersiniaceae</taxon>
        <taxon>Yersinia</taxon>
    </lineage>
</organism>
<name>KHSE_YERP3</name>
<reference key="1">
    <citation type="journal article" date="2007" name="PLoS Genet.">
        <title>The complete genome sequence of Yersinia pseudotuberculosis IP31758, the causative agent of Far East scarlet-like fever.</title>
        <authorList>
            <person name="Eppinger M."/>
            <person name="Rosovitz M.J."/>
            <person name="Fricke W.F."/>
            <person name="Rasko D.A."/>
            <person name="Kokorina G."/>
            <person name="Fayolle C."/>
            <person name="Lindler L.E."/>
            <person name="Carniel E."/>
            <person name="Ravel J."/>
        </authorList>
    </citation>
    <scope>NUCLEOTIDE SEQUENCE [LARGE SCALE GENOMIC DNA]</scope>
    <source>
        <strain>IP 31758</strain>
    </source>
</reference>
<dbReference type="EC" id="2.7.1.39" evidence="1"/>
<dbReference type="EMBL" id="CP000720">
    <property type="protein sequence ID" value="ABS48501.1"/>
    <property type="molecule type" value="Genomic_DNA"/>
</dbReference>
<dbReference type="RefSeq" id="WP_002209238.1">
    <property type="nucleotide sequence ID" value="NC_009708.1"/>
</dbReference>
<dbReference type="SMR" id="A7FMF2"/>
<dbReference type="GeneID" id="96664104"/>
<dbReference type="KEGG" id="ypi:YpsIP31758_3475"/>
<dbReference type="HOGENOM" id="CLU_041243_1_1_6"/>
<dbReference type="UniPathway" id="UPA00050">
    <property type="reaction ID" value="UER00064"/>
</dbReference>
<dbReference type="Proteomes" id="UP000002412">
    <property type="component" value="Chromosome"/>
</dbReference>
<dbReference type="GO" id="GO:0005737">
    <property type="term" value="C:cytoplasm"/>
    <property type="evidence" value="ECO:0007669"/>
    <property type="project" value="UniProtKB-SubCell"/>
</dbReference>
<dbReference type="GO" id="GO:0005524">
    <property type="term" value="F:ATP binding"/>
    <property type="evidence" value="ECO:0007669"/>
    <property type="project" value="UniProtKB-UniRule"/>
</dbReference>
<dbReference type="GO" id="GO:0004413">
    <property type="term" value="F:homoserine kinase activity"/>
    <property type="evidence" value="ECO:0007669"/>
    <property type="project" value="UniProtKB-UniRule"/>
</dbReference>
<dbReference type="GO" id="GO:0009088">
    <property type="term" value="P:threonine biosynthetic process"/>
    <property type="evidence" value="ECO:0007669"/>
    <property type="project" value="UniProtKB-UniRule"/>
</dbReference>
<dbReference type="FunFam" id="3.30.230.10:FF:000020">
    <property type="entry name" value="Homoserine kinase"/>
    <property type="match status" value="1"/>
</dbReference>
<dbReference type="FunFam" id="3.30.70.890:FF:000002">
    <property type="entry name" value="Homoserine kinase"/>
    <property type="match status" value="1"/>
</dbReference>
<dbReference type="Gene3D" id="3.30.230.10">
    <property type="match status" value="1"/>
</dbReference>
<dbReference type="Gene3D" id="3.30.70.890">
    <property type="entry name" value="GHMP kinase, C-terminal domain"/>
    <property type="match status" value="1"/>
</dbReference>
<dbReference type="HAMAP" id="MF_00384">
    <property type="entry name" value="Homoser_kinase"/>
    <property type="match status" value="1"/>
</dbReference>
<dbReference type="InterPro" id="IPR013750">
    <property type="entry name" value="GHMP_kinase_C_dom"/>
</dbReference>
<dbReference type="InterPro" id="IPR036554">
    <property type="entry name" value="GHMP_kinase_C_sf"/>
</dbReference>
<dbReference type="InterPro" id="IPR006204">
    <property type="entry name" value="GHMP_kinase_N_dom"/>
</dbReference>
<dbReference type="InterPro" id="IPR006203">
    <property type="entry name" value="GHMP_knse_ATP-bd_CS"/>
</dbReference>
<dbReference type="InterPro" id="IPR000870">
    <property type="entry name" value="Homoserine_kinase"/>
</dbReference>
<dbReference type="InterPro" id="IPR020568">
    <property type="entry name" value="Ribosomal_Su5_D2-typ_SF"/>
</dbReference>
<dbReference type="InterPro" id="IPR014721">
    <property type="entry name" value="Ribsml_uS5_D2-typ_fold_subgr"/>
</dbReference>
<dbReference type="NCBIfam" id="NF002288">
    <property type="entry name" value="PRK01212.1-4"/>
    <property type="match status" value="1"/>
</dbReference>
<dbReference type="NCBIfam" id="TIGR00191">
    <property type="entry name" value="thrB"/>
    <property type="match status" value="1"/>
</dbReference>
<dbReference type="PANTHER" id="PTHR20861:SF1">
    <property type="entry name" value="HOMOSERINE KINASE"/>
    <property type="match status" value="1"/>
</dbReference>
<dbReference type="PANTHER" id="PTHR20861">
    <property type="entry name" value="HOMOSERINE/4-DIPHOSPHOCYTIDYL-2-C-METHYL-D-ERYTHRITOL KINASE"/>
    <property type="match status" value="1"/>
</dbReference>
<dbReference type="Pfam" id="PF08544">
    <property type="entry name" value="GHMP_kinases_C"/>
    <property type="match status" value="1"/>
</dbReference>
<dbReference type="Pfam" id="PF00288">
    <property type="entry name" value="GHMP_kinases_N"/>
    <property type="match status" value="1"/>
</dbReference>
<dbReference type="PIRSF" id="PIRSF000676">
    <property type="entry name" value="Homoser_kin"/>
    <property type="match status" value="1"/>
</dbReference>
<dbReference type="PRINTS" id="PR00958">
    <property type="entry name" value="HOMSERKINASE"/>
</dbReference>
<dbReference type="SUPFAM" id="SSF55060">
    <property type="entry name" value="GHMP Kinase, C-terminal domain"/>
    <property type="match status" value="1"/>
</dbReference>
<dbReference type="SUPFAM" id="SSF54211">
    <property type="entry name" value="Ribosomal protein S5 domain 2-like"/>
    <property type="match status" value="1"/>
</dbReference>
<dbReference type="PROSITE" id="PS00627">
    <property type="entry name" value="GHMP_KINASES_ATP"/>
    <property type="match status" value="1"/>
</dbReference>
<protein>
    <recommendedName>
        <fullName evidence="1">Homoserine kinase</fullName>
        <shortName evidence="1">HK</shortName>
        <shortName evidence="1">HSK</shortName>
        <ecNumber evidence="1">2.7.1.39</ecNumber>
    </recommendedName>
</protein>
<gene>
    <name evidence="1" type="primary">thrB</name>
    <name type="ordered locus">YpsIP31758_3475</name>
</gene>
<proteinExistence type="inferred from homology"/>
<feature type="chain" id="PRO_1000060703" description="Homoserine kinase">
    <location>
        <begin position="1"/>
        <end position="309"/>
    </location>
</feature>
<feature type="binding site" evidence="1">
    <location>
        <begin position="91"/>
        <end position="101"/>
    </location>
    <ligand>
        <name>ATP</name>
        <dbReference type="ChEBI" id="CHEBI:30616"/>
    </ligand>
</feature>
<accession>A7FMF2</accession>